<dbReference type="EMBL" id="EF639009">
    <property type="protein sequence ID" value="ABR27894.1"/>
    <property type="molecule type" value="mRNA"/>
</dbReference>
<dbReference type="SMR" id="A6YPJ8"/>
<dbReference type="GO" id="GO:0022627">
    <property type="term" value="C:cytosolic small ribosomal subunit"/>
    <property type="evidence" value="ECO:0007669"/>
    <property type="project" value="UniProtKB-UniRule"/>
</dbReference>
<dbReference type="GO" id="GO:0003735">
    <property type="term" value="F:structural constituent of ribosome"/>
    <property type="evidence" value="ECO:0007669"/>
    <property type="project" value="UniProtKB-UniRule"/>
</dbReference>
<dbReference type="GO" id="GO:0006412">
    <property type="term" value="P:translation"/>
    <property type="evidence" value="ECO:0007669"/>
    <property type="project" value="UniProtKB-UniRule"/>
</dbReference>
<dbReference type="HAMAP" id="MF_03122">
    <property type="entry name" value="Ribosomal_eS1_euk"/>
    <property type="match status" value="1"/>
</dbReference>
<dbReference type="InterPro" id="IPR001593">
    <property type="entry name" value="Ribosomal_eS1"/>
</dbReference>
<dbReference type="InterPro" id="IPR018281">
    <property type="entry name" value="Ribosomal_eS1_CS"/>
</dbReference>
<dbReference type="InterPro" id="IPR027500">
    <property type="entry name" value="Ribosomal_eS1_euk"/>
</dbReference>
<dbReference type="PANTHER" id="PTHR11830">
    <property type="entry name" value="40S RIBOSOMAL PROTEIN S3A"/>
    <property type="match status" value="1"/>
</dbReference>
<dbReference type="Pfam" id="PF01015">
    <property type="entry name" value="Ribosomal_S3Ae"/>
    <property type="match status" value="1"/>
</dbReference>
<dbReference type="SMART" id="SM01397">
    <property type="entry name" value="Ribosomal_S3Ae"/>
    <property type="match status" value="1"/>
</dbReference>
<dbReference type="PROSITE" id="PS01191">
    <property type="entry name" value="RIBOSOMAL_S3AE"/>
    <property type="match status" value="1"/>
</dbReference>
<keyword id="KW-0963">Cytoplasm</keyword>
<keyword id="KW-0687">Ribonucleoprotein</keyword>
<keyword id="KW-0689">Ribosomal protein</keyword>
<accession>A6YPJ8</accession>
<organism>
    <name type="scientific">Triatoma infestans</name>
    <name type="common">Assassin bug</name>
    <dbReference type="NCBI Taxonomy" id="30076"/>
    <lineage>
        <taxon>Eukaryota</taxon>
        <taxon>Metazoa</taxon>
        <taxon>Ecdysozoa</taxon>
        <taxon>Arthropoda</taxon>
        <taxon>Hexapoda</taxon>
        <taxon>Insecta</taxon>
        <taxon>Pterygota</taxon>
        <taxon>Neoptera</taxon>
        <taxon>Paraneoptera</taxon>
        <taxon>Hemiptera</taxon>
        <taxon>Heteroptera</taxon>
        <taxon>Panheteroptera</taxon>
        <taxon>Cimicomorpha</taxon>
        <taxon>Reduviidae</taxon>
        <taxon>Triatominae</taxon>
        <taxon>Triatoma</taxon>
    </lineage>
</organism>
<comment type="subunit">
    <text evidence="1">Component of the small ribosomal subunit. Mature ribosomes consist of a small (40S) and a large (60S) subunit. The 40S subunit contains about 33 different proteins and 1 molecule of RNA (18S). The 60S subunit contains about 49 different proteins and 3 molecules of RNA (28S, 5.8S and 5S).</text>
</comment>
<comment type="subcellular location">
    <subcellularLocation>
        <location evidence="1">Cytoplasm</location>
    </subcellularLocation>
</comment>
<comment type="similarity">
    <text evidence="1">Belongs to the eukaryotic ribosomal protein eS1 family.</text>
</comment>
<protein>
    <recommendedName>
        <fullName evidence="1">Small ribosomal subunit protein eS1</fullName>
    </recommendedName>
    <alternativeName>
        <fullName evidence="3">40S ribosomal protein S3a</fullName>
    </alternativeName>
</protein>
<evidence type="ECO:0000255" key="1">
    <source>
        <dbReference type="HAMAP-Rule" id="MF_03122"/>
    </source>
</evidence>
<evidence type="ECO:0000256" key="2">
    <source>
        <dbReference type="SAM" id="MobiDB-lite"/>
    </source>
</evidence>
<evidence type="ECO:0000305" key="3"/>
<proteinExistence type="evidence at transcript level"/>
<name>RS3A_TRIIF</name>
<sequence>MAVGKNKGLSKGGKKGVKKKVVDPFTRKDWYDVKAPSMFTTRQIGKTLVNRTQGTKIASEGLKGRVFEVSLADLQNDTDAERSYRKFRLIAEDVQARNVLTNFHGMDLTTDKLRSMVKKWQTLIEANVDVRTTDGYLLRVFCIGFTNKDQLSQRKTCYAQHTQVRQIRRKMVDNITSSISNSDLRVVVNKLIPDSIAKDIEKACQGIYPLHDVYIRKVKVLKKPRFELSKLLELHGDGKGSDEPGAKVSRPEAYEPPVQESV</sequence>
<feature type="initiator methionine" description="Removed" evidence="1">
    <location>
        <position position="1"/>
    </location>
</feature>
<feature type="chain" id="PRO_0000389320" description="Small ribosomal subunit protein eS1">
    <location>
        <begin position="2"/>
        <end position="262"/>
    </location>
</feature>
<feature type="region of interest" description="Disordered" evidence="2">
    <location>
        <begin position="235"/>
        <end position="262"/>
    </location>
</feature>
<feature type="compositionally biased region" description="Basic and acidic residues" evidence="2">
    <location>
        <begin position="235"/>
        <end position="253"/>
    </location>
</feature>
<reference key="1">
    <citation type="journal article" date="2008" name="Insect Biochem. Mol. Biol.">
        <title>An insight into the sialome of the blood-sucking bug Triatoma infestans, a vector of Chagas' disease.</title>
        <authorList>
            <person name="Assumpcao T.C.F."/>
            <person name="Francischetti I.M.B."/>
            <person name="Andersen J.F."/>
            <person name="Schwarz A."/>
            <person name="Santana J.M."/>
            <person name="Ribeiro J.M.C."/>
        </authorList>
    </citation>
    <scope>NUCLEOTIDE SEQUENCE [LARGE SCALE MRNA]</scope>
    <source>
        <tissue>Salivary gland</tissue>
    </source>
</reference>